<gene>
    <name type="primary">nst1</name>
    <name type="ORF">SS1G_06572</name>
</gene>
<dbReference type="EMBL" id="CH476628">
    <property type="protein sequence ID" value="EDO04089.1"/>
    <property type="molecule type" value="Genomic_DNA"/>
</dbReference>
<dbReference type="RefSeq" id="XP_001592331.1">
    <property type="nucleotide sequence ID" value="XM_001592281.1"/>
</dbReference>
<dbReference type="SMR" id="A7EMM3"/>
<dbReference type="STRING" id="665079.A7EMM3"/>
<dbReference type="GeneID" id="5488702"/>
<dbReference type="KEGG" id="ssl:SS1G_06572"/>
<dbReference type="InParanoid" id="A7EMM3"/>
<dbReference type="OMA" id="EEDTQYG"/>
<dbReference type="Proteomes" id="UP000001312">
    <property type="component" value="Unassembled WGS sequence"/>
</dbReference>
<dbReference type="GO" id="GO:0005737">
    <property type="term" value="C:cytoplasm"/>
    <property type="evidence" value="ECO:0007669"/>
    <property type="project" value="UniProtKB-SubCell"/>
</dbReference>
<dbReference type="CDD" id="cd22249">
    <property type="entry name" value="UDM1_RNF168_RNF169-like"/>
    <property type="match status" value="1"/>
</dbReference>
<dbReference type="InterPro" id="IPR051195">
    <property type="entry name" value="Fungal_stress_NST1"/>
</dbReference>
<dbReference type="InterPro" id="IPR025279">
    <property type="entry name" value="NST1"/>
</dbReference>
<dbReference type="PANTHER" id="PTHR31780:SF10">
    <property type="entry name" value="LD36051P"/>
    <property type="match status" value="1"/>
</dbReference>
<dbReference type="PANTHER" id="PTHR31780">
    <property type="entry name" value="STRESS RESPONSE PROTEIN NST1-RELATED"/>
    <property type="match status" value="1"/>
</dbReference>
<dbReference type="Pfam" id="PF13945">
    <property type="entry name" value="NST1"/>
    <property type="match status" value="1"/>
</dbReference>
<sequence>MPANQRKQTSQSSYLQTPRNTATPSTQDAGKSVIAPKSSTSDSSETFLTMAQTTTKSNGQLPTPSANINGVPPTVNRKKQKRRAKQAARAAAEQAQGSQTNGGPSPGDVKKQMQELEARFRETGLDEQYDDDEQLDPAEDNAYYSDEEGDAYSGSYGHDGSSTNGYAMPTTNSSSKKQKKKKKSKSSQSDNSNYAHHGPNGSSHNHVSLPIPLQSPPNMQRGPGISKEKIWNTSSQEERERIKEFWLSLGEDERKSLVKVEKDAVLKKMKEQQKHSCSCTVCGRKRTAIEEELEVLYDAYYEELEQYANHQGGDGPPPMMPPPRRFGAMSGLQPPNRLPPVFTGQQPSRGRIVEQLGDDEDEEGDEEYSEDDADEDDYSDEEPEEIPRSHATDFFNFGNSLTVQGGILTVADDLLKNDGKKFIEMMEQLAERRMAREEDAKEQYANANYGHPPNGSMHPHSHGHLHNHPPPPEEDDYDDEEDDEDEYDSQEEDYDEEEMDSMTEEQRMEEGRRMFQIFAARMFEQRVLTAYKEKVAKERQQKLLEELEEESRADSLRKAKKAKDAQKKKEKLLEKKRALAEEKARKEAEKAAEEASLREIEEKKAEEQRLKREENRKKKEAQKKADEEERVRKEAEKQRRLQEQRERQAEQERKQREAKEREKKEKEELRRQALEAKEAKEKEAKERREKHEREKREKEAKVKADKEARELQKREEVAAQQAAVQAAQSAAQASRRPNQVPTPNLSHVLASPHISVAIPAVPKAPTPIKLRTNSQQENHSTIPRTPSGIPQSPFAGMQPMPGGLQPGMPMVPPGFGRPHHDPMFTHQQPIGNQFRPLPIPNGGMPQFQPGFNMHHMPQGRGFPMHGPPGFPQPSPNGMGSIGQLFGAPKEAPPSQAHSRNQSGSFDALSSTTQAQPIARPAPIGRPSSIVHGARHGDKSSNGEPDESSKHLGSSALLDDTDEPLKVGMGPRRSSAAPGNSSRQNFLPPPFGMDRSDPAGMMSSFGTWGAPPNPFGSSSLPGSNGFGGGWNTSLNMNNSFGMPPYFRPSQPRSVAVRLMICMACQNLQSSTPDGWLDIDSIKNEVALLNPPREEPVSERELLDICDTEGNQMNGGGTFEIRHSNGKSQIHYVSDPTPHDFRAVGAPGEIGSPISGNASRNPGPPGRAPIGGF</sequence>
<proteinExistence type="inferred from homology"/>
<organism>
    <name type="scientific">Sclerotinia sclerotiorum (strain ATCC 18683 / 1980 / Ss-1)</name>
    <name type="common">White mold</name>
    <name type="synonym">Whetzelinia sclerotiorum</name>
    <dbReference type="NCBI Taxonomy" id="665079"/>
    <lineage>
        <taxon>Eukaryota</taxon>
        <taxon>Fungi</taxon>
        <taxon>Dikarya</taxon>
        <taxon>Ascomycota</taxon>
        <taxon>Pezizomycotina</taxon>
        <taxon>Leotiomycetes</taxon>
        <taxon>Helotiales</taxon>
        <taxon>Sclerotiniaceae</taxon>
        <taxon>Sclerotinia</taxon>
    </lineage>
</organism>
<protein>
    <recommendedName>
        <fullName>Stress response protein nst1</fullName>
    </recommendedName>
</protein>
<name>NST1_SCLS1</name>
<keyword id="KW-0175">Coiled coil</keyword>
<keyword id="KW-0963">Cytoplasm</keyword>
<keyword id="KW-1185">Reference proteome</keyword>
<keyword id="KW-0346">Stress response</keyword>
<accession>A7EMM3</accession>
<comment type="function">
    <text evidence="1">May act as a negative regulator of salt tolerance.</text>
</comment>
<comment type="subcellular location">
    <subcellularLocation>
        <location evidence="1">Cytoplasm</location>
    </subcellularLocation>
</comment>
<comment type="similarity">
    <text evidence="4">Belongs to the NST1 family.</text>
</comment>
<evidence type="ECO:0000250" key="1"/>
<evidence type="ECO:0000255" key="2"/>
<evidence type="ECO:0000256" key="3">
    <source>
        <dbReference type="SAM" id="MobiDB-lite"/>
    </source>
</evidence>
<evidence type="ECO:0000305" key="4"/>
<reference key="1">
    <citation type="journal article" date="2011" name="PLoS Genet.">
        <title>Genomic analysis of the necrotrophic fungal pathogens Sclerotinia sclerotiorum and Botrytis cinerea.</title>
        <authorList>
            <person name="Amselem J."/>
            <person name="Cuomo C.A."/>
            <person name="van Kan J.A.L."/>
            <person name="Viaud M."/>
            <person name="Benito E.P."/>
            <person name="Couloux A."/>
            <person name="Coutinho P.M."/>
            <person name="de Vries R.P."/>
            <person name="Dyer P.S."/>
            <person name="Fillinger S."/>
            <person name="Fournier E."/>
            <person name="Gout L."/>
            <person name="Hahn M."/>
            <person name="Kohn L."/>
            <person name="Lapalu N."/>
            <person name="Plummer K.M."/>
            <person name="Pradier J.-M."/>
            <person name="Quevillon E."/>
            <person name="Sharon A."/>
            <person name="Simon A."/>
            <person name="ten Have A."/>
            <person name="Tudzynski B."/>
            <person name="Tudzynski P."/>
            <person name="Wincker P."/>
            <person name="Andrew M."/>
            <person name="Anthouard V."/>
            <person name="Beever R.E."/>
            <person name="Beffa R."/>
            <person name="Benoit I."/>
            <person name="Bouzid O."/>
            <person name="Brault B."/>
            <person name="Chen Z."/>
            <person name="Choquer M."/>
            <person name="Collemare J."/>
            <person name="Cotton P."/>
            <person name="Danchin E.G."/>
            <person name="Da Silva C."/>
            <person name="Gautier A."/>
            <person name="Giraud C."/>
            <person name="Giraud T."/>
            <person name="Gonzalez C."/>
            <person name="Grossetete S."/>
            <person name="Gueldener U."/>
            <person name="Henrissat B."/>
            <person name="Howlett B.J."/>
            <person name="Kodira C."/>
            <person name="Kretschmer M."/>
            <person name="Lappartient A."/>
            <person name="Leroch M."/>
            <person name="Levis C."/>
            <person name="Mauceli E."/>
            <person name="Neuveglise C."/>
            <person name="Oeser B."/>
            <person name="Pearson M."/>
            <person name="Poulain J."/>
            <person name="Poussereau N."/>
            <person name="Quesneville H."/>
            <person name="Rascle C."/>
            <person name="Schumacher J."/>
            <person name="Segurens B."/>
            <person name="Sexton A."/>
            <person name="Silva E."/>
            <person name="Sirven C."/>
            <person name="Soanes D.M."/>
            <person name="Talbot N.J."/>
            <person name="Templeton M."/>
            <person name="Yandava C."/>
            <person name="Yarden O."/>
            <person name="Zeng Q."/>
            <person name="Rollins J.A."/>
            <person name="Lebrun M.-H."/>
            <person name="Dickman M."/>
        </authorList>
    </citation>
    <scope>NUCLEOTIDE SEQUENCE [LARGE SCALE GENOMIC DNA]</scope>
    <source>
        <strain>ATCC 18683 / 1980 / Ss-1</strain>
    </source>
</reference>
<feature type="chain" id="PRO_0000324459" description="Stress response protein nst1">
    <location>
        <begin position="1"/>
        <end position="1171"/>
    </location>
</feature>
<feature type="region of interest" description="Disordered" evidence="3">
    <location>
        <begin position="1"/>
        <end position="238"/>
    </location>
</feature>
<feature type="region of interest" description="Disordered" evidence="3">
    <location>
        <begin position="307"/>
        <end position="392"/>
    </location>
</feature>
<feature type="region of interest" description="Disordered" evidence="3">
    <location>
        <begin position="433"/>
        <end position="510"/>
    </location>
</feature>
<feature type="region of interest" description="Disordered" evidence="3">
    <location>
        <begin position="545"/>
        <end position="739"/>
    </location>
</feature>
<feature type="region of interest" description="Disordered" evidence="3">
    <location>
        <begin position="863"/>
        <end position="996"/>
    </location>
</feature>
<feature type="region of interest" description="Disordered" evidence="3">
    <location>
        <begin position="1139"/>
        <end position="1171"/>
    </location>
</feature>
<feature type="coiled-coil region" evidence="2">
    <location>
        <begin position="474"/>
        <end position="733"/>
    </location>
</feature>
<feature type="compositionally biased region" description="Polar residues" evidence="3">
    <location>
        <begin position="1"/>
        <end position="29"/>
    </location>
</feature>
<feature type="compositionally biased region" description="Polar residues" evidence="3">
    <location>
        <begin position="37"/>
        <end position="68"/>
    </location>
</feature>
<feature type="compositionally biased region" description="Basic residues" evidence="3">
    <location>
        <begin position="76"/>
        <end position="86"/>
    </location>
</feature>
<feature type="compositionally biased region" description="Low complexity" evidence="3">
    <location>
        <begin position="87"/>
        <end position="96"/>
    </location>
</feature>
<feature type="compositionally biased region" description="Basic and acidic residues" evidence="3">
    <location>
        <begin position="108"/>
        <end position="124"/>
    </location>
</feature>
<feature type="compositionally biased region" description="Acidic residues" evidence="3">
    <location>
        <begin position="125"/>
        <end position="150"/>
    </location>
</feature>
<feature type="compositionally biased region" description="Polar residues" evidence="3">
    <location>
        <begin position="160"/>
        <end position="172"/>
    </location>
</feature>
<feature type="compositionally biased region" description="Basic residues" evidence="3">
    <location>
        <begin position="176"/>
        <end position="185"/>
    </location>
</feature>
<feature type="compositionally biased region" description="Polar residues" evidence="3">
    <location>
        <begin position="190"/>
        <end position="206"/>
    </location>
</feature>
<feature type="compositionally biased region" description="Basic and acidic residues" evidence="3">
    <location>
        <begin position="226"/>
        <end position="238"/>
    </location>
</feature>
<feature type="compositionally biased region" description="Pro residues" evidence="3">
    <location>
        <begin position="315"/>
        <end position="324"/>
    </location>
</feature>
<feature type="compositionally biased region" description="Acidic residues" evidence="3">
    <location>
        <begin position="356"/>
        <end position="384"/>
    </location>
</feature>
<feature type="compositionally biased region" description="Basic and acidic residues" evidence="3">
    <location>
        <begin position="433"/>
        <end position="442"/>
    </location>
</feature>
<feature type="compositionally biased region" description="Acidic residues" evidence="3">
    <location>
        <begin position="472"/>
        <end position="503"/>
    </location>
</feature>
<feature type="compositionally biased region" description="Basic and acidic residues" evidence="3">
    <location>
        <begin position="545"/>
        <end position="717"/>
    </location>
</feature>
<feature type="compositionally biased region" description="Low complexity" evidence="3">
    <location>
        <begin position="718"/>
        <end position="734"/>
    </location>
</feature>
<feature type="compositionally biased region" description="Pro residues" evidence="3">
    <location>
        <begin position="865"/>
        <end position="874"/>
    </location>
</feature>
<feature type="compositionally biased region" description="Polar residues" evidence="3">
    <location>
        <begin position="895"/>
        <end position="915"/>
    </location>
</feature>